<sequence length="417" mass="44596">MTASVNSLDLAAIRADFPILKRIMRGGNPLAYLDSGATSQRPLQVLDAEREFLTASNGAVHRGAHQLMEEATDAYEQGRADIALFVGADTDELVFTKNATEALNLVSYVLGDSRFERAVGPGDVIVTTELEHHANLIPWQELARRTGATLRWYGVTDDGRIDLDSLYLDDRVKVVAFTHHSNVTGVLTPVSELVSRAHQSGALTVLDACQSVPHQPVDLHELGVDFAAFSGHKMLGPNGIGVLYGRRELLAQMPPFLTGGSMIETVTMEGATYAPAPQRFEAGTPMTSQVVGLAAAARYLGAIGMAAVEAHERELVAAAIEGLSGIDGVRILGPTSMRDRGSPVAFVVEGVHAHDVGQVLDDGGVAVRVGHHCALPLHRRFGLAATARASFAVYNTADEVDRLVAGVRRSRHFFGRA</sequence>
<proteinExistence type="evidence at protein level"/>
<reference key="1">
    <citation type="journal article" date="1998" name="Nature">
        <title>Deciphering the biology of Mycobacterium tuberculosis from the complete genome sequence.</title>
        <authorList>
            <person name="Cole S.T."/>
            <person name="Brosch R."/>
            <person name="Parkhill J."/>
            <person name="Garnier T."/>
            <person name="Churcher C.M."/>
            <person name="Harris D.E."/>
            <person name="Gordon S.V."/>
            <person name="Eiglmeier K."/>
            <person name="Gas S."/>
            <person name="Barry C.E. III"/>
            <person name="Tekaia F."/>
            <person name="Badcock K."/>
            <person name="Basham D."/>
            <person name="Brown D."/>
            <person name="Chillingworth T."/>
            <person name="Connor R."/>
            <person name="Davies R.M."/>
            <person name="Devlin K."/>
            <person name="Feltwell T."/>
            <person name="Gentles S."/>
            <person name="Hamlin N."/>
            <person name="Holroyd S."/>
            <person name="Hornsby T."/>
            <person name="Jagels K."/>
            <person name="Krogh A."/>
            <person name="McLean J."/>
            <person name="Moule S."/>
            <person name="Murphy L.D."/>
            <person name="Oliver S."/>
            <person name="Osborne J."/>
            <person name="Quail M.A."/>
            <person name="Rajandream M.A."/>
            <person name="Rogers J."/>
            <person name="Rutter S."/>
            <person name="Seeger K."/>
            <person name="Skelton S."/>
            <person name="Squares S."/>
            <person name="Squares R."/>
            <person name="Sulston J.E."/>
            <person name="Taylor K."/>
            <person name="Whitehead S."/>
            <person name="Barrell B.G."/>
        </authorList>
    </citation>
    <scope>NUCLEOTIDE SEQUENCE [LARGE SCALE GENOMIC DNA]</scope>
    <source>
        <strain>ATCC 25618 / H37Rv</strain>
    </source>
</reference>
<reference key="2">
    <citation type="journal article" date="2008" name="BMC Syst. Biol.">
        <title>targetTB: a target identification pipeline for Mycobacterium tuberculosis through an interactome, reactome and genome-scale structural analysis.</title>
        <authorList>
            <person name="Raman K."/>
            <person name="Yeturu K."/>
            <person name="Chandra N."/>
        </authorList>
    </citation>
    <scope>IDENTIFICATION AS A DRUG TARGET [LARGE SCALE ANALYSIS]</scope>
</reference>
<reference key="3">
    <citation type="journal article" date="2011" name="Mol. Cell. Proteomics">
        <title>Proteogenomic analysis of Mycobacterium tuberculosis by high resolution mass spectrometry.</title>
        <authorList>
            <person name="Kelkar D.S."/>
            <person name="Kumar D."/>
            <person name="Kumar P."/>
            <person name="Balakrishnan L."/>
            <person name="Muthusamy B."/>
            <person name="Yadav A.K."/>
            <person name="Shrivastava P."/>
            <person name="Marimuthu A."/>
            <person name="Anand S."/>
            <person name="Sundaram H."/>
            <person name="Kingsbury R."/>
            <person name="Harsha H.C."/>
            <person name="Nair B."/>
            <person name="Prasad T.S."/>
            <person name="Chauhan D.S."/>
            <person name="Katoch K."/>
            <person name="Katoch V.M."/>
            <person name="Kumar P."/>
            <person name="Chaerkady R."/>
            <person name="Ramachandran S."/>
            <person name="Dash D."/>
            <person name="Pandey A."/>
        </authorList>
    </citation>
    <scope>ACETYLATION [LARGE SCALE ANALYSIS] AT THR-2</scope>
    <scope>CLEAVAGE OF INITIATOR METHIONINE [LARGE SCALE ANALYSIS]</scope>
    <scope>IDENTIFICATION BY MASS SPECTROMETRY [LARGE SCALE ANALYSIS]</scope>
    <source>
        <strain>ATCC 25618 / H37Rv</strain>
    </source>
</reference>
<dbReference type="EC" id="2.8.1.7"/>
<dbReference type="EMBL" id="AL123456">
    <property type="protein sequence ID" value="CCP44223.1"/>
    <property type="molecule type" value="Genomic_DNA"/>
</dbReference>
<dbReference type="PIR" id="C70872">
    <property type="entry name" value="C70872"/>
</dbReference>
<dbReference type="RefSeq" id="NP_215980.1">
    <property type="nucleotide sequence ID" value="NC_000962.3"/>
</dbReference>
<dbReference type="RefSeq" id="WP_003407490.1">
    <property type="nucleotide sequence ID" value="NZ_NVQJ01000004.1"/>
</dbReference>
<dbReference type="PDB" id="8ODQ">
    <property type="method" value="X-ray"/>
    <property type="resolution" value="1.65 A"/>
    <property type="chains" value="B/D=1-417"/>
</dbReference>
<dbReference type="PDBsum" id="8ODQ"/>
<dbReference type="SMR" id="P9WQ69"/>
<dbReference type="FunCoup" id="P9WQ69">
    <property type="interactions" value="175"/>
</dbReference>
<dbReference type="STRING" id="83332.Rv1464"/>
<dbReference type="iPTMnet" id="P9WQ69"/>
<dbReference type="PaxDb" id="83332-Rv1464"/>
<dbReference type="DNASU" id="886565"/>
<dbReference type="GeneID" id="886565"/>
<dbReference type="KEGG" id="mtu:Rv1464"/>
<dbReference type="KEGG" id="mtv:RVBD_1464"/>
<dbReference type="TubercuList" id="Rv1464"/>
<dbReference type="eggNOG" id="COG0520">
    <property type="taxonomic scope" value="Bacteria"/>
</dbReference>
<dbReference type="InParanoid" id="P9WQ69"/>
<dbReference type="OrthoDB" id="9804366at2"/>
<dbReference type="PhylomeDB" id="P9WQ69"/>
<dbReference type="Proteomes" id="UP000001584">
    <property type="component" value="Chromosome"/>
</dbReference>
<dbReference type="GO" id="GO:0005886">
    <property type="term" value="C:plasma membrane"/>
    <property type="evidence" value="ECO:0007005"/>
    <property type="project" value="MTBBASE"/>
</dbReference>
<dbReference type="GO" id="GO:0031071">
    <property type="term" value="F:cysteine desulfurase activity"/>
    <property type="evidence" value="ECO:0007669"/>
    <property type="project" value="UniProtKB-EC"/>
</dbReference>
<dbReference type="GO" id="GO:0030170">
    <property type="term" value="F:pyridoxal phosphate binding"/>
    <property type="evidence" value="ECO:0007669"/>
    <property type="project" value="InterPro"/>
</dbReference>
<dbReference type="GO" id="GO:0006534">
    <property type="term" value="P:cysteine metabolic process"/>
    <property type="evidence" value="ECO:0007669"/>
    <property type="project" value="InterPro"/>
</dbReference>
<dbReference type="CDD" id="cd06453">
    <property type="entry name" value="SufS_like"/>
    <property type="match status" value="1"/>
</dbReference>
<dbReference type="FunFam" id="3.40.640.10:FF:000112">
    <property type="entry name" value="Probable cysteine desulfurase"/>
    <property type="match status" value="1"/>
</dbReference>
<dbReference type="Gene3D" id="3.90.1150.10">
    <property type="entry name" value="Aspartate Aminotransferase, domain 1"/>
    <property type="match status" value="1"/>
</dbReference>
<dbReference type="Gene3D" id="3.40.640.10">
    <property type="entry name" value="Type I PLP-dependent aspartate aminotransferase-like (Major domain)"/>
    <property type="match status" value="1"/>
</dbReference>
<dbReference type="InterPro" id="IPR000192">
    <property type="entry name" value="Aminotrans_V_dom"/>
</dbReference>
<dbReference type="InterPro" id="IPR020578">
    <property type="entry name" value="Aminotrans_V_PyrdxlP_BS"/>
</dbReference>
<dbReference type="InterPro" id="IPR010970">
    <property type="entry name" value="Cys_dSase_SufS"/>
</dbReference>
<dbReference type="InterPro" id="IPR015424">
    <property type="entry name" value="PyrdxlP-dep_Trfase"/>
</dbReference>
<dbReference type="InterPro" id="IPR015421">
    <property type="entry name" value="PyrdxlP-dep_Trfase_major"/>
</dbReference>
<dbReference type="InterPro" id="IPR015422">
    <property type="entry name" value="PyrdxlP-dep_Trfase_small"/>
</dbReference>
<dbReference type="NCBIfam" id="TIGR01979">
    <property type="entry name" value="sufS"/>
    <property type="match status" value="1"/>
</dbReference>
<dbReference type="PANTHER" id="PTHR43586">
    <property type="entry name" value="CYSTEINE DESULFURASE"/>
    <property type="match status" value="1"/>
</dbReference>
<dbReference type="PANTHER" id="PTHR43586:SF8">
    <property type="entry name" value="CYSTEINE DESULFURASE 1, CHLOROPLASTIC"/>
    <property type="match status" value="1"/>
</dbReference>
<dbReference type="Pfam" id="PF00266">
    <property type="entry name" value="Aminotran_5"/>
    <property type="match status" value="1"/>
</dbReference>
<dbReference type="SUPFAM" id="SSF53383">
    <property type="entry name" value="PLP-dependent transferases"/>
    <property type="match status" value="1"/>
</dbReference>
<dbReference type="PROSITE" id="PS00595">
    <property type="entry name" value="AA_TRANSFER_CLASS_5"/>
    <property type="match status" value="1"/>
</dbReference>
<protein>
    <recommendedName>
        <fullName>Probable cysteine desulfurase</fullName>
        <ecNumber>2.8.1.7</ecNumber>
    </recommendedName>
</protein>
<feature type="initiator methionine" description="Removed" evidence="3">
    <location>
        <position position="1"/>
    </location>
</feature>
<feature type="chain" id="PRO_0000150304" description="Probable cysteine desulfurase">
    <location>
        <begin position="2"/>
        <end position="417"/>
    </location>
</feature>
<feature type="active site" description="Cysteine persulfide intermediate" evidence="1">
    <location>
        <position position="373"/>
    </location>
</feature>
<feature type="modified residue" description="N-acetylthreonine" evidence="3">
    <location>
        <position position="2"/>
    </location>
</feature>
<feature type="modified residue" description="N6-(pyridoxal phosphate)lysine" evidence="1">
    <location>
        <position position="233"/>
    </location>
</feature>
<feature type="helix" evidence="4">
    <location>
        <begin position="10"/>
        <end position="14"/>
    </location>
</feature>
<feature type="helix" evidence="4">
    <location>
        <begin position="18"/>
        <end position="21"/>
    </location>
</feature>
<feature type="strand" evidence="4">
    <location>
        <begin position="27"/>
        <end position="29"/>
    </location>
</feature>
<feature type="turn" evidence="4">
    <location>
        <begin position="35"/>
        <end position="37"/>
    </location>
</feature>
<feature type="helix" evidence="4">
    <location>
        <begin position="43"/>
        <end position="55"/>
    </location>
</feature>
<feature type="strand" evidence="4">
    <location>
        <begin position="60"/>
        <end position="63"/>
    </location>
</feature>
<feature type="helix" evidence="4">
    <location>
        <begin position="66"/>
        <end position="85"/>
    </location>
</feature>
<feature type="helix" evidence="4">
    <location>
        <begin position="90"/>
        <end position="92"/>
    </location>
</feature>
<feature type="strand" evidence="4">
    <location>
        <begin position="93"/>
        <end position="98"/>
    </location>
</feature>
<feature type="helix" evidence="4">
    <location>
        <begin position="99"/>
        <end position="109"/>
    </location>
</feature>
<feature type="strand" evidence="4">
    <location>
        <begin position="124"/>
        <end position="128"/>
    </location>
</feature>
<feature type="helix" evidence="4">
    <location>
        <begin position="133"/>
        <end position="135"/>
    </location>
</feature>
<feature type="helix" evidence="4">
    <location>
        <begin position="137"/>
        <end position="146"/>
    </location>
</feature>
<feature type="strand" evidence="4">
    <location>
        <begin position="149"/>
        <end position="153"/>
    </location>
</feature>
<feature type="strand" evidence="4">
    <location>
        <begin position="159"/>
        <end position="161"/>
    </location>
</feature>
<feature type="helix" evidence="4">
    <location>
        <begin position="163"/>
        <end position="165"/>
    </location>
</feature>
<feature type="strand" evidence="4">
    <location>
        <begin position="172"/>
        <end position="180"/>
    </location>
</feature>
<feature type="turn" evidence="4">
    <location>
        <begin position="182"/>
        <end position="184"/>
    </location>
</feature>
<feature type="helix" evidence="4">
    <location>
        <begin position="190"/>
        <end position="198"/>
    </location>
</feature>
<feature type="turn" evidence="4">
    <location>
        <begin position="199"/>
        <end position="201"/>
    </location>
</feature>
<feature type="strand" evidence="4">
    <location>
        <begin position="203"/>
        <end position="207"/>
    </location>
</feature>
<feature type="turn" evidence="4">
    <location>
        <begin position="209"/>
        <end position="214"/>
    </location>
</feature>
<feature type="helix" evidence="4">
    <location>
        <begin position="219"/>
        <end position="222"/>
    </location>
</feature>
<feature type="strand" evidence="4">
    <location>
        <begin position="225"/>
        <end position="231"/>
    </location>
</feature>
<feature type="turn" evidence="4">
    <location>
        <begin position="232"/>
        <end position="235"/>
    </location>
</feature>
<feature type="strand" evidence="4">
    <location>
        <begin position="241"/>
        <end position="245"/>
    </location>
</feature>
<feature type="helix" evidence="4">
    <location>
        <begin position="247"/>
        <end position="251"/>
    </location>
</feature>
<feature type="strand" evidence="4">
    <location>
        <begin position="262"/>
        <end position="266"/>
    </location>
</feature>
<feature type="strand" evidence="4">
    <location>
        <begin position="271"/>
        <end position="273"/>
    </location>
</feature>
<feature type="helix" evidence="4">
    <location>
        <begin position="278"/>
        <end position="280"/>
    </location>
</feature>
<feature type="helix" evidence="4">
    <location>
        <begin position="287"/>
        <end position="303"/>
    </location>
</feature>
<feature type="helix" evidence="4">
    <location>
        <begin position="305"/>
        <end position="324"/>
    </location>
</feature>
<feature type="strand" evidence="4">
    <location>
        <begin position="329"/>
        <end position="333"/>
    </location>
</feature>
<feature type="strand" evidence="4">
    <location>
        <begin position="344"/>
        <end position="348"/>
    </location>
</feature>
<feature type="helix" evidence="4">
    <location>
        <begin position="353"/>
        <end position="362"/>
    </location>
</feature>
<feature type="strand" evidence="4">
    <location>
        <begin position="368"/>
        <end position="370"/>
    </location>
</feature>
<feature type="helix" evidence="4">
    <location>
        <begin position="375"/>
        <end position="380"/>
    </location>
</feature>
<feature type="strand" evidence="4">
    <location>
        <begin position="386"/>
        <end position="390"/>
    </location>
</feature>
<feature type="helix" evidence="4">
    <location>
        <begin position="397"/>
        <end position="414"/>
    </location>
</feature>
<organism>
    <name type="scientific">Mycobacterium tuberculosis (strain ATCC 25618 / H37Rv)</name>
    <dbReference type="NCBI Taxonomy" id="83332"/>
    <lineage>
        <taxon>Bacteria</taxon>
        <taxon>Bacillati</taxon>
        <taxon>Actinomycetota</taxon>
        <taxon>Actinomycetes</taxon>
        <taxon>Mycobacteriales</taxon>
        <taxon>Mycobacteriaceae</taxon>
        <taxon>Mycobacterium</taxon>
        <taxon>Mycobacterium tuberculosis complex</taxon>
    </lineage>
</organism>
<comment type="function">
    <text evidence="1">Catalyzes the removal of elemental sulfur and selenium atoms from L-cysteine, L-cystine, L-selenocysteine, and L-selenocystine to produce L-alanine.</text>
</comment>
<comment type="catalytic activity">
    <reaction>
        <text>(sulfur carrier)-H + L-cysteine = (sulfur carrier)-SH + L-alanine</text>
        <dbReference type="Rhea" id="RHEA:43892"/>
        <dbReference type="Rhea" id="RHEA-COMP:14737"/>
        <dbReference type="Rhea" id="RHEA-COMP:14739"/>
        <dbReference type="ChEBI" id="CHEBI:29917"/>
        <dbReference type="ChEBI" id="CHEBI:35235"/>
        <dbReference type="ChEBI" id="CHEBI:57972"/>
        <dbReference type="ChEBI" id="CHEBI:64428"/>
        <dbReference type="EC" id="2.8.1.7"/>
    </reaction>
</comment>
<comment type="cofactor">
    <cofactor evidence="1">
        <name>pyridoxal 5'-phosphate</name>
        <dbReference type="ChEBI" id="CHEBI:597326"/>
    </cofactor>
</comment>
<comment type="miscellaneous">
    <text>Was identified as a high-confidence drug target.</text>
</comment>
<comment type="similarity">
    <text evidence="2">Belongs to the class-V pyridoxal-phosphate-dependent aminotransferase family. Csd subfamily.</text>
</comment>
<gene>
    <name type="primary">csd</name>
    <name type="ordered locus">Rv1464</name>
    <name type="ORF">MTV007.11</name>
</gene>
<accession>P9WQ69</accession>
<accession>L0T9P9</accession>
<accession>O53155</accession>
<accession>P63516</accession>
<name>CSD_MYCTU</name>
<evidence type="ECO:0000250" key="1"/>
<evidence type="ECO:0000305" key="2"/>
<evidence type="ECO:0007744" key="3">
    <source>
    </source>
</evidence>
<evidence type="ECO:0007829" key="4">
    <source>
        <dbReference type="PDB" id="8ODQ"/>
    </source>
</evidence>
<keyword id="KW-0002">3D-structure</keyword>
<keyword id="KW-0007">Acetylation</keyword>
<keyword id="KW-0663">Pyridoxal phosphate</keyword>
<keyword id="KW-1185">Reference proteome</keyword>
<keyword id="KW-0808">Transferase</keyword>